<reference key="1">
    <citation type="journal article" date="2006" name="Nat. Biotechnol.">
        <title>Complete genome sequence of the entomopathogenic and metabolically versatile soil bacterium Pseudomonas entomophila.</title>
        <authorList>
            <person name="Vodovar N."/>
            <person name="Vallenet D."/>
            <person name="Cruveiller S."/>
            <person name="Rouy Z."/>
            <person name="Barbe V."/>
            <person name="Acosta C."/>
            <person name="Cattolico L."/>
            <person name="Jubin C."/>
            <person name="Lajus A."/>
            <person name="Segurens B."/>
            <person name="Vacherie B."/>
            <person name="Wincker P."/>
            <person name="Weissenbach J."/>
            <person name="Lemaitre B."/>
            <person name="Medigue C."/>
            <person name="Boccard F."/>
        </authorList>
    </citation>
    <scope>NUCLEOTIDE SEQUENCE [LARGE SCALE GENOMIC DNA]</scope>
    <source>
        <strain>L48</strain>
    </source>
</reference>
<feature type="chain" id="PRO_1000045168" description="UPF0270 protein PSEEN1465">
    <location>
        <begin position="1"/>
        <end position="75"/>
    </location>
</feature>
<name>Y1465_PSEE4</name>
<sequence length="75" mass="8660">MLIPYDQLEAETLTRLIEDFVTRDGTDNGDDTPLETRVLRVRQALAKGQAFILFDMESQQCQLLARHEVPRELLD</sequence>
<organism>
    <name type="scientific">Pseudomonas entomophila (strain L48)</name>
    <dbReference type="NCBI Taxonomy" id="384676"/>
    <lineage>
        <taxon>Bacteria</taxon>
        <taxon>Pseudomonadati</taxon>
        <taxon>Pseudomonadota</taxon>
        <taxon>Gammaproteobacteria</taxon>
        <taxon>Pseudomonadales</taxon>
        <taxon>Pseudomonadaceae</taxon>
        <taxon>Pseudomonas</taxon>
    </lineage>
</organism>
<accession>Q1IDC3</accession>
<dbReference type="EMBL" id="CT573326">
    <property type="protein sequence ID" value="CAK14336.1"/>
    <property type="molecule type" value="Genomic_DNA"/>
</dbReference>
<dbReference type="RefSeq" id="WP_011532751.1">
    <property type="nucleotide sequence ID" value="NC_008027.1"/>
</dbReference>
<dbReference type="SMR" id="Q1IDC3"/>
<dbReference type="STRING" id="384676.PSEEN1465"/>
<dbReference type="GeneID" id="32804719"/>
<dbReference type="KEGG" id="pen:PSEEN1465"/>
<dbReference type="eggNOG" id="COG3089">
    <property type="taxonomic scope" value="Bacteria"/>
</dbReference>
<dbReference type="HOGENOM" id="CLU_186759_2_0_6"/>
<dbReference type="OrthoDB" id="6120729at2"/>
<dbReference type="Proteomes" id="UP000000658">
    <property type="component" value="Chromosome"/>
</dbReference>
<dbReference type="Gene3D" id="1.10.10.610">
    <property type="entry name" value="YehU-like"/>
    <property type="match status" value="1"/>
</dbReference>
<dbReference type="HAMAP" id="MF_00690">
    <property type="entry name" value="UPF0270"/>
    <property type="match status" value="1"/>
</dbReference>
<dbReference type="InterPro" id="IPR010648">
    <property type="entry name" value="UPF0270"/>
</dbReference>
<dbReference type="InterPro" id="IPR036685">
    <property type="entry name" value="YehU-like_sf"/>
</dbReference>
<dbReference type="NCBIfam" id="NF001441">
    <property type="entry name" value="PRK00304.1"/>
    <property type="match status" value="1"/>
</dbReference>
<dbReference type="Pfam" id="PF06794">
    <property type="entry name" value="UPF0270"/>
    <property type="match status" value="1"/>
</dbReference>
<dbReference type="PIRSF" id="PIRSF006169">
    <property type="entry name" value="UCP006169"/>
    <property type="match status" value="1"/>
</dbReference>
<dbReference type="SUPFAM" id="SSF118001">
    <property type="entry name" value="YehU-like"/>
    <property type="match status" value="1"/>
</dbReference>
<gene>
    <name type="ordered locus">PSEEN1465</name>
</gene>
<comment type="similarity">
    <text evidence="1">Belongs to the UPF0270 family.</text>
</comment>
<protein>
    <recommendedName>
        <fullName evidence="1">UPF0270 protein PSEEN1465</fullName>
    </recommendedName>
</protein>
<evidence type="ECO:0000255" key="1">
    <source>
        <dbReference type="HAMAP-Rule" id="MF_00690"/>
    </source>
</evidence>
<proteinExistence type="inferred from homology"/>